<dbReference type="EC" id="2.5.1.7" evidence="1"/>
<dbReference type="EMBL" id="AE003852">
    <property type="protein sequence ID" value="AAF95656.1"/>
    <property type="molecule type" value="Genomic_DNA"/>
</dbReference>
<dbReference type="PIR" id="D82067">
    <property type="entry name" value="D82067"/>
</dbReference>
<dbReference type="RefSeq" id="NP_232143.1">
    <property type="nucleotide sequence ID" value="NC_002505.1"/>
</dbReference>
<dbReference type="RefSeq" id="WP_000410586.1">
    <property type="nucleotide sequence ID" value="NZ_LT906614.1"/>
</dbReference>
<dbReference type="PDB" id="4R7U">
    <property type="method" value="X-ray"/>
    <property type="resolution" value="2.45 A"/>
    <property type="chains" value="A/B/C/D=1-419"/>
</dbReference>
<dbReference type="PDBsum" id="4R7U"/>
<dbReference type="SMR" id="Q9KP62"/>
<dbReference type="STRING" id="243277.VC_2514"/>
<dbReference type="DNASU" id="2615178"/>
<dbReference type="EnsemblBacteria" id="AAF95656">
    <property type="protein sequence ID" value="AAF95656"/>
    <property type="gene ID" value="VC_2514"/>
</dbReference>
<dbReference type="GeneID" id="69718877"/>
<dbReference type="KEGG" id="vch:VC_2514"/>
<dbReference type="PATRIC" id="fig|243277.26.peg.2395"/>
<dbReference type="eggNOG" id="COG0766">
    <property type="taxonomic scope" value="Bacteria"/>
</dbReference>
<dbReference type="HOGENOM" id="CLU_027387_0_0_6"/>
<dbReference type="UniPathway" id="UPA00219"/>
<dbReference type="EvolutionaryTrace" id="Q9KP62"/>
<dbReference type="Proteomes" id="UP000000584">
    <property type="component" value="Chromosome 1"/>
</dbReference>
<dbReference type="GO" id="GO:0005737">
    <property type="term" value="C:cytoplasm"/>
    <property type="evidence" value="ECO:0007669"/>
    <property type="project" value="UniProtKB-SubCell"/>
</dbReference>
<dbReference type="GO" id="GO:0008760">
    <property type="term" value="F:UDP-N-acetylglucosamine 1-carboxyvinyltransferase activity"/>
    <property type="evidence" value="ECO:0000318"/>
    <property type="project" value="GO_Central"/>
</dbReference>
<dbReference type="GO" id="GO:0051301">
    <property type="term" value="P:cell division"/>
    <property type="evidence" value="ECO:0007669"/>
    <property type="project" value="UniProtKB-KW"/>
</dbReference>
<dbReference type="GO" id="GO:0071555">
    <property type="term" value="P:cell wall organization"/>
    <property type="evidence" value="ECO:0007669"/>
    <property type="project" value="UniProtKB-KW"/>
</dbReference>
<dbReference type="GO" id="GO:0009252">
    <property type="term" value="P:peptidoglycan biosynthetic process"/>
    <property type="evidence" value="ECO:0000318"/>
    <property type="project" value="GO_Central"/>
</dbReference>
<dbReference type="GO" id="GO:0008360">
    <property type="term" value="P:regulation of cell shape"/>
    <property type="evidence" value="ECO:0007669"/>
    <property type="project" value="UniProtKB-KW"/>
</dbReference>
<dbReference type="GO" id="GO:0019277">
    <property type="term" value="P:UDP-N-acetylgalactosamine biosynthetic process"/>
    <property type="evidence" value="ECO:0007669"/>
    <property type="project" value="InterPro"/>
</dbReference>
<dbReference type="CDD" id="cd01555">
    <property type="entry name" value="UdpNAET"/>
    <property type="match status" value="1"/>
</dbReference>
<dbReference type="FunFam" id="3.65.10.10:FF:000002">
    <property type="entry name" value="UDP-N-acetylglucosamine 1-carboxyvinyltransferase"/>
    <property type="match status" value="1"/>
</dbReference>
<dbReference type="Gene3D" id="3.65.10.10">
    <property type="entry name" value="Enolpyruvate transferase domain"/>
    <property type="match status" value="2"/>
</dbReference>
<dbReference type="HAMAP" id="MF_00111">
    <property type="entry name" value="MurA"/>
    <property type="match status" value="1"/>
</dbReference>
<dbReference type="InterPro" id="IPR001986">
    <property type="entry name" value="Enolpyruvate_Tfrase_dom"/>
</dbReference>
<dbReference type="InterPro" id="IPR036968">
    <property type="entry name" value="Enolpyruvate_Tfrase_sf"/>
</dbReference>
<dbReference type="InterPro" id="IPR050068">
    <property type="entry name" value="MurA_subfamily"/>
</dbReference>
<dbReference type="InterPro" id="IPR013792">
    <property type="entry name" value="RNA3'P_cycl/enolpyr_Trfase_a/b"/>
</dbReference>
<dbReference type="InterPro" id="IPR005750">
    <property type="entry name" value="UDP_GlcNAc_COvinyl_MurA"/>
</dbReference>
<dbReference type="NCBIfam" id="TIGR01072">
    <property type="entry name" value="murA"/>
    <property type="match status" value="1"/>
</dbReference>
<dbReference type="NCBIfam" id="NF006873">
    <property type="entry name" value="PRK09369.1"/>
    <property type="match status" value="1"/>
</dbReference>
<dbReference type="PANTHER" id="PTHR43783">
    <property type="entry name" value="UDP-N-ACETYLGLUCOSAMINE 1-CARBOXYVINYLTRANSFERASE"/>
    <property type="match status" value="1"/>
</dbReference>
<dbReference type="PANTHER" id="PTHR43783:SF1">
    <property type="entry name" value="UDP-N-ACETYLGLUCOSAMINE 1-CARBOXYVINYLTRANSFERASE"/>
    <property type="match status" value="1"/>
</dbReference>
<dbReference type="Pfam" id="PF00275">
    <property type="entry name" value="EPSP_synthase"/>
    <property type="match status" value="1"/>
</dbReference>
<dbReference type="SUPFAM" id="SSF55205">
    <property type="entry name" value="EPT/RTPC-like"/>
    <property type="match status" value="1"/>
</dbReference>
<organism>
    <name type="scientific">Vibrio cholerae serotype O1 (strain ATCC 39315 / El Tor Inaba N16961)</name>
    <dbReference type="NCBI Taxonomy" id="243277"/>
    <lineage>
        <taxon>Bacteria</taxon>
        <taxon>Pseudomonadati</taxon>
        <taxon>Pseudomonadota</taxon>
        <taxon>Gammaproteobacteria</taxon>
        <taxon>Vibrionales</taxon>
        <taxon>Vibrionaceae</taxon>
        <taxon>Vibrio</taxon>
    </lineage>
</organism>
<comment type="function">
    <text evidence="1">Cell wall formation. Adds enolpyruvyl to UDP-N-acetylglucosamine.</text>
</comment>
<comment type="catalytic activity">
    <reaction evidence="1">
        <text>phosphoenolpyruvate + UDP-N-acetyl-alpha-D-glucosamine = UDP-N-acetyl-3-O-(1-carboxyvinyl)-alpha-D-glucosamine + phosphate</text>
        <dbReference type="Rhea" id="RHEA:18681"/>
        <dbReference type="ChEBI" id="CHEBI:43474"/>
        <dbReference type="ChEBI" id="CHEBI:57705"/>
        <dbReference type="ChEBI" id="CHEBI:58702"/>
        <dbReference type="ChEBI" id="CHEBI:68483"/>
        <dbReference type="EC" id="2.5.1.7"/>
    </reaction>
</comment>
<comment type="pathway">
    <text evidence="1">Cell wall biogenesis; peptidoglycan biosynthesis.</text>
</comment>
<comment type="subcellular location">
    <subcellularLocation>
        <location evidence="1">Cytoplasm</location>
    </subcellularLocation>
</comment>
<comment type="similarity">
    <text evidence="1">Belongs to the EPSP synthase family. MurA subfamily.</text>
</comment>
<protein>
    <recommendedName>
        <fullName evidence="1">UDP-N-acetylglucosamine 1-carboxyvinyltransferase</fullName>
        <ecNumber evidence="1">2.5.1.7</ecNumber>
    </recommendedName>
    <alternativeName>
        <fullName evidence="1">Enoylpyruvate transferase</fullName>
    </alternativeName>
    <alternativeName>
        <fullName evidence="1">UDP-N-acetylglucosamine enolpyruvyl transferase</fullName>
        <shortName evidence="1">EPT</shortName>
    </alternativeName>
</protein>
<evidence type="ECO:0000255" key="1">
    <source>
        <dbReference type="HAMAP-Rule" id="MF_00111"/>
    </source>
</evidence>
<evidence type="ECO:0007744" key="2">
    <source>
        <dbReference type="PDB" id="4R7U"/>
    </source>
</evidence>
<evidence type="ECO:0007829" key="3">
    <source>
        <dbReference type="PDB" id="4R7U"/>
    </source>
</evidence>
<name>MURA_VIBCH</name>
<gene>
    <name evidence="1" type="primary">murA</name>
    <name type="ordered locus">VC_2514</name>
</gene>
<reference key="1">
    <citation type="journal article" date="2000" name="Nature">
        <title>DNA sequence of both chromosomes of the cholera pathogen Vibrio cholerae.</title>
        <authorList>
            <person name="Heidelberg J.F."/>
            <person name="Eisen J.A."/>
            <person name="Nelson W.C."/>
            <person name="Clayton R.A."/>
            <person name="Gwinn M.L."/>
            <person name="Dodson R.J."/>
            <person name="Haft D.H."/>
            <person name="Hickey E.K."/>
            <person name="Peterson J.D."/>
            <person name="Umayam L.A."/>
            <person name="Gill S.R."/>
            <person name="Nelson K.E."/>
            <person name="Read T.D."/>
            <person name="Tettelin H."/>
            <person name="Richardson D.L."/>
            <person name="Ermolaeva M.D."/>
            <person name="Vamathevan J.J."/>
            <person name="Bass S."/>
            <person name="Qin H."/>
            <person name="Dragoi I."/>
            <person name="Sellers P."/>
            <person name="McDonald L.A."/>
            <person name="Utterback T.R."/>
            <person name="Fleischmann R.D."/>
            <person name="Nierman W.C."/>
            <person name="White O."/>
            <person name="Salzberg S.L."/>
            <person name="Smith H.O."/>
            <person name="Colwell R.R."/>
            <person name="Mekalanos J.J."/>
            <person name="Venter J.C."/>
            <person name="Fraser C.M."/>
        </authorList>
    </citation>
    <scope>NUCLEOTIDE SEQUENCE [LARGE SCALE GENOMIC DNA]</scope>
    <source>
        <strain>ATCC 39315 / El Tor Inaba N16961</strain>
    </source>
</reference>
<reference key="2">
    <citation type="submission" date="2014-08" db="PDB data bank">
        <title>Structure of UDP-N-acetylglucosamine 1-carboxyvinyltransferase from Vibrio cholerae in complex with substrate UDP-N-acetylglucosamine and the drug fosfomycin.</title>
        <authorList>
            <consortium name="Center for structural genomics of infectious diseases (CSGID)"/>
        </authorList>
    </citation>
    <scope>X-RAY CRYSTALLOGRAPHY (2.45 ANGSTROMS) IN COMPLEX WITH UDP-N-ACETYLGLUCOSAMINE AND FOSFOMYCIN</scope>
</reference>
<feature type="chain" id="PRO_0000178948" description="UDP-N-acetylglucosamine 1-carboxyvinyltransferase">
    <location>
        <begin position="1"/>
        <end position="419"/>
    </location>
</feature>
<feature type="active site" description="Proton donor" evidence="1">
    <location>
        <position position="116"/>
    </location>
</feature>
<feature type="binding site" evidence="2">
    <location>
        <begin position="23"/>
        <end position="24"/>
    </location>
    <ligand>
        <name>phosphoenolpyruvate</name>
        <dbReference type="ChEBI" id="CHEBI:58702"/>
    </ligand>
</feature>
<feature type="binding site" evidence="1">
    <location>
        <position position="92"/>
    </location>
    <ligand>
        <name>UDP-N-acetyl-alpha-D-glucosamine</name>
        <dbReference type="ChEBI" id="CHEBI:57705"/>
    </ligand>
</feature>
<feature type="binding site" evidence="2">
    <location>
        <begin position="121"/>
        <end position="125"/>
    </location>
    <ligand>
        <name>UDP-N-acetyl-alpha-D-glucosamine</name>
        <dbReference type="ChEBI" id="CHEBI:57705"/>
    </ligand>
</feature>
<feature type="binding site" evidence="2">
    <location>
        <begin position="161"/>
        <end position="165"/>
    </location>
    <ligand>
        <name>UDP-N-acetyl-alpha-D-glucosamine</name>
        <dbReference type="ChEBI" id="CHEBI:57705"/>
    </ligand>
</feature>
<feature type="binding site" evidence="2">
    <location>
        <position position="306"/>
    </location>
    <ligand>
        <name>UDP-N-acetyl-alpha-D-glucosamine</name>
        <dbReference type="ChEBI" id="CHEBI:57705"/>
    </ligand>
</feature>
<feature type="binding site" evidence="2">
    <location>
        <position position="328"/>
    </location>
    <ligand>
        <name>UDP-N-acetyl-alpha-D-glucosamine</name>
        <dbReference type="ChEBI" id="CHEBI:57705"/>
    </ligand>
</feature>
<feature type="modified residue" description="2-(S-cysteinyl)pyruvic acid O-phosphothioketal" evidence="1">
    <location>
        <position position="116"/>
    </location>
</feature>
<feature type="strand" evidence="3">
    <location>
        <begin position="3"/>
        <end position="7"/>
    </location>
</feature>
<feature type="strand" evidence="3">
    <location>
        <begin position="14"/>
        <end position="18"/>
    </location>
</feature>
<feature type="helix" evidence="3">
    <location>
        <begin position="23"/>
        <end position="32"/>
    </location>
</feature>
<feature type="helix" evidence="3">
    <location>
        <begin position="33"/>
        <end position="35"/>
    </location>
</feature>
<feature type="strand" evidence="3">
    <location>
        <begin position="36"/>
        <end position="38"/>
    </location>
</feature>
<feature type="strand" evidence="3">
    <location>
        <begin position="40"/>
        <end position="44"/>
    </location>
</feature>
<feature type="helix" evidence="3">
    <location>
        <begin position="49"/>
        <end position="59"/>
    </location>
</feature>
<feature type="turn" evidence="3">
    <location>
        <begin position="60"/>
        <end position="62"/>
    </location>
</feature>
<feature type="strand" evidence="3">
    <location>
        <begin position="64"/>
        <end position="74"/>
    </location>
</feature>
<feature type="helix" evidence="3">
    <location>
        <begin position="85"/>
        <end position="88"/>
    </location>
</feature>
<feature type="helix" evidence="3">
    <location>
        <begin position="92"/>
        <end position="97"/>
    </location>
</feature>
<feature type="helix" evidence="3">
    <location>
        <begin position="98"/>
        <end position="105"/>
    </location>
</feature>
<feature type="strand" evidence="3">
    <location>
        <begin position="106"/>
        <end position="111"/>
    </location>
</feature>
<feature type="helix" evidence="3">
    <location>
        <begin position="124"/>
        <end position="132"/>
    </location>
</feature>
<feature type="strand" evidence="3">
    <location>
        <begin position="136"/>
        <end position="140"/>
    </location>
</feature>
<feature type="strand" evidence="3">
    <location>
        <begin position="143"/>
        <end position="147"/>
    </location>
</feature>
<feature type="strand" evidence="3">
    <location>
        <begin position="156"/>
        <end position="158"/>
    </location>
</feature>
<feature type="helix" evidence="3">
    <location>
        <begin position="164"/>
        <end position="174"/>
    </location>
</feature>
<feature type="strand" evidence="3">
    <location>
        <begin position="177"/>
        <end position="185"/>
    </location>
</feature>
<feature type="helix" evidence="3">
    <location>
        <begin position="190"/>
        <end position="201"/>
    </location>
</feature>
<feature type="strand" evidence="3">
    <location>
        <begin position="205"/>
        <end position="207"/>
    </location>
</feature>
<feature type="strand" evidence="3">
    <location>
        <begin position="211"/>
        <end position="217"/>
    </location>
</feature>
<feature type="strand" evidence="3">
    <location>
        <begin position="225"/>
        <end position="228"/>
    </location>
</feature>
<feature type="helix" evidence="3">
    <location>
        <begin position="233"/>
        <end position="244"/>
    </location>
</feature>
<feature type="turn" evidence="3">
    <location>
        <begin position="245"/>
        <end position="247"/>
    </location>
</feature>
<feature type="strand" evidence="3">
    <location>
        <begin position="249"/>
        <end position="254"/>
    </location>
</feature>
<feature type="helix" evidence="3">
    <location>
        <begin position="257"/>
        <end position="259"/>
    </location>
</feature>
<feature type="helix" evidence="3">
    <location>
        <begin position="261"/>
        <end position="269"/>
    </location>
</feature>
<feature type="strand" evidence="3">
    <location>
        <begin position="273"/>
        <end position="276"/>
    </location>
</feature>
<feature type="strand" evidence="3">
    <location>
        <begin position="278"/>
        <end position="284"/>
    </location>
</feature>
<feature type="strand" evidence="3">
    <location>
        <begin position="294"/>
        <end position="297"/>
    </location>
</feature>
<feature type="helix" evidence="3">
    <location>
        <begin position="305"/>
        <end position="307"/>
    </location>
</feature>
<feature type="helix" evidence="3">
    <location>
        <begin position="308"/>
        <end position="317"/>
    </location>
</feature>
<feature type="strand" evidence="3">
    <location>
        <begin position="318"/>
        <end position="320"/>
    </location>
</feature>
<feature type="strand" evidence="3">
    <location>
        <begin position="323"/>
        <end position="325"/>
    </location>
</feature>
<feature type="helix" evidence="3">
    <location>
        <begin position="335"/>
        <end position="341"/>
    </location>
</feature>
<feature type="strand" evidence="3">
    <location>
        <begin position="346"/>
        <end position="349"/>
    </location>
</feature>
<feature type="strand" evidence="3">
    <location>
        <begin position="352"/>
        <end position="355"/>
    </location>
</feature>
<feature type="strand" evidence="3">
    <location>
        <begin position="365"/>
        <end position="367"/>
    </location>
</feature>
<feature type="helix" evidence="3">
    <location>
        <begin position="371"/>
        <end position="383"/>
    </location>
</feature>
<feature type="strand" evidence="3">
    <location>
        <begin position="384"/>
        <end position="391"/>
    </location>
</feature>
<feature type="helix" evidence="3">
    <location>
        <begin position="393"/>
        <end position="398"/>
    </location>
</feature>
<feature type="strand" evidence="3">
    <location>
        <begin position="400"/>
        <end position="402"/>
    </location>
</feature>
<feature type="helix" evidence="3">
    <location>
        <begin position="403"/>
        <end position="408"/>
    </location>
</feature>
<feature type="turn" evidence="3">
    <location>
        <begin position="409"/>
        <end position="411"/>
    </location>
</feature>
<feature type="strand" evidence="3">
    <location>
        <begin position="414"/>
        <end position="417"/>
    </location>
</feature>
<sequence length="419" mass="44686">MEKFRVIGSTQPLQGEVTISGAKNAALPILFASILAEEPVEVANVPHLRDIDTTMELLERLGAKVERNGSVHVDAGPINQYCAPYDLVKTMRASIWALGPLVARFGQGQVSLPGGCAIGARPVDLHIHGLEQLGATITLEDGYVKAHVDGRLQGAHIVMDKVSVGATITIMCAATLAEGTTVLDNAAREPEIVDTAMFLNKLGAKISGAGTDSITIEGVERLGGGKHAVVPDRIETGTFLVAAAVSRGKIVCRNTHAHLLEAVLAKLEEAGAEIECGEDWISLDMTGRELKAVTVRTAPHPGFPTDMQAQFTLLNMMAKGGGVITETIFENRFMHVPELKRMGAKAEIEGNTVICGDVDRLSGAQVMATDLRASASLVIAGCIAKGETIVDRIYHIDRGYERIEDKLSALGANIERFRD</sequence>
<proteinExistence type="evidence at protein level"/>
<keyword id="KW-0002">3D-structure</keyword>
<keyword id="KW-0131">Cell cycle</keyword>
<keyword id="KW-0132">Cell division</keyword>
<keyword id="KW-0133">Cell shape</keyword>
<keyword id="KW-0961">Cell wall biogenesis/degradation</keyword>
<keyword id="KW-0963">Cytoplasm</keyword>
<keyword id="KW-0573">Peptidoglycan synthesis</keyword>
<keyword id="KW-0670">Pyruvate</keyword>
<keyword id="KW-1185">Reference proteome</keyword>
<keyword id="KW-0808">Transferase</keyword>
<accession>Q9KP62</accession>